<reference key="1">
    <citation type="journal article" date="2003" name="Proc. Natl. Acad. Sci. U.S.A.">
        <title>Complete genome sequence of the Q-fever pathogen, Coxiella burnetii.</title>
        <authorList>
            <person name="Seshadri R."/>
            <person name="Paulsen I.T."/>
            <person name="Eisen J.A."/>
            <person name="Read T.D."/>
            <person name="Nelson K.E."/>
            <person name="Nelson W.C."/>
            <person name="Ward N.L."/>
            <person name="Tettelin H."/>
            <person name="Davidsen T.M."/>
            <person name="Beanan M.J."/>
            <person name="DeBoy R.T."/>
            <person name="Daugherty S.C."/>
            <person name="Brinkac L.M."/>
            <person name="Madupu R."/>
            <person name="Dodson R.J."/>
            <person name="Khouri H.M."/>
            <person name="Lee K.H."/>
            <person name="Carty H.A."/>
            <person name="Scanlan D."/>
            <person name="Heinzen R.A."/>
            <person name="Thompson H.A."/>
            <person name="Samuel J.E."/>
            <person name="Fraser C.M."/>
            <person name="Heidelberg J.F."/>
        </authorList>
    </citation>
    <scope>NUCLEOTIDE SEQUENCE [LARGE SCALE GENOMIC DNA]</scope>
    <source>
        <strain>RSA 493 / Nine Mile phase I</strain>
    </source>
</reference>
<organism>
    <name type="scientific">Coxiella burnetii (strain RSA 493 / Nine Mile phase I)</name>
    <dbReference type="NCBI Taxonomy" id="227377"/>
    <lineage>
        <taxon>Bacteria</taxon>
        <taxon>Pseudomonadati</taxon>
        <taxon>Pseudomonadota</taxon>
        <taxon>Gammaproteobacteria</taxon>
        <taxon>Legionellales</taxon>
        <taxon>Coxiellaceae</taxon>
        <taxon>Coxiella</taxon>
    </lineage>
</organism>
<name>PANC_COXBU</name>
<gene>
    <name evidence="1" type="primary">panC</name>
    <name type="ordered locus">CBU_0423</name>
</gene>
<protein>
    <recommendedName>
        <fullName evidence="1">Pantothenate synthetase</fullName>
        <shortName evidence="1">PS</shortName>
        <ecNumber evidence="1">6.3.2.1</ecNumber>
    </recommendedName>
    <alternativeName>
        <fullName evidence="1">Pantoate--beta-alanine ligase</fullName>
    </alternativeName>
    <alternativeName>
        <fullName evidence="1">Pantoate-activating enzyme</fullName>
    </alternativeName>
</protein>
<accession>Q83EA3</accession>
<keyword id="KW-0067">ATP-binding</keyword>
<keyword id="KW-0963">Cytoplasm</keyword>
<keyword id="KW-0436">Ligase</keyword>
<keyword id="KW-0547">Nucleotide-binding</keyword>
<keyword id="KW-0566">Pantothenate biosynthesis</keyword>
<keyword id="KW-1185">Reference proteome</keyword>
<feature type="chain" id="PRO_0000305432" description="Pantothenate synthetase">
    <location>
        <begin position="1"/>
        <end position="257"/>
    </location>
</feature>
<feature type="active site" description="Proton donor" evidence="1">
    <location>
        <position position="36"/>
    </location>
</feature>
<feature type="binding site" evidence="1">
    <location>
        <begin position="29"/>
        <end position="36"/>
    </location>
    <ligand>
        <name>ATP</name>
        <dbReference type="ChEBI" id="CHEBI:30616"/>
    </ligand>
</feature>
<feature type="binding site" evidence="1">
    <location>
        <position position="60"/>
    </location>
    <ligand>
        <name>(R)-pantoate</name>
        <dbReference type="ChEBI" id="CHEBI:15980"/>
    </ligand>
</feature>
<feature type="binding site" evidence="1">
    <location>
        <position position="60"/>
    </location>
    <ligand>
        <name>beta-alanine</name>
        <dbReference type="ChEBI" id="CHEBI:57966"/>
    </ligand>
</feature>
<feature type="binding site" evidence="1">
    <location>
        <begin position="145"/>
        <end position="148"/>
    </location>
    <ligand>
        <name>ATP</name>
        <dbReference type="ChEBI" id="CHEBI:30616"/>
    </ligand>
</feature>
<feature type="binding site" evidence="1">
    <location>
        <position position="151"/>
    </location>
    <ligand>
        <name>(R)-pantoate</name>
        <dbReference type="ChEBI" id="CHEBI:15980"/>
    </ligand>
</feature>
<feature type="binding site" evidence="1">
    <location>
        <position position="174"/>
    </location>
    <ligand>
        <name>ATP</name>
        <dbReference type="ChEBI" id="CHEBI:30616"/>
    </ligand>
</feature>
<feature type="binding site" evidence="1">
    <location>
        <begin position="182"/>
        <end position="185"/>
    </location>
    <ligand>
        <name>ATP</name>
        <dbReference type="ChEBI" id="CHEBI:30616"/>
    </ligand>
</feature>
<dbReference type="EC" id="6.3.2.1" evidence="1"/>
<dbReference type="EMBL" id="AE016828">
    <property type="protein sequence ID" value="AAO89975.1"/>
    <property type="molecule type" value="Genomic_DNA"/>
</dbReference>
<dbReference type="RefSeq" id="NP_819461.1">
    <property type="nucleotide sequence ID" value="NC_002971.4"/>
</dbReference>
<dbReference type="RefSeq" id="WP_005771941.1">
    <property type="nucleotide sequence ID" value="NZ_CDBG01000001.1"/>
</dbReference>
<dbReference type="SMR" id="Q83EA3"/>
<dbReference type="STRING" id="227377.CBU_0423"/>
<dbReference type="EnsemblBacteria" id="AAO89975">
    <property type="protein sequence ID" value="AAO89975"/>
    <property type="gene ID" value="CBU_0423"/>
</dbReference>
<dbReference type="GeneID" id="1208307"/>
<dbReference type="KEGG" id="cbu:CBU_0423"/>
<dbReference type="PATRIC" id="fig|227377.7.peg.412"/>
<dbReference type="eggNOG" id="COG0414">
    <property type="taxonomic scope" value="Bacteria"/>
</dbReference>
<dbReference type="HOGENOM" id="CLU_047148_0_0_6"/>
<dbReference type="OrthoDB" id="9773087at2"/>
<dbReference type="UniPathway" id="UPA00028">
    <property type="reaction ID" value="UER00005"/>
</dbReference>
<dbReference type="Proteomes" id="UP000002671">
    <property type="component" value="Chromosome"/>
</dbReference>
<dbReference type="GO" id="GO:0005829">
    <property type="term" value="C:cytosol"/>
    <property type="evidence" value="ECO:0000318"/>
    <property type="project" value="GO_Central"/>
</dbReference>
<dbReference type="GO" id="GO:0005524">
    <property type="term" value="F:ATP binding"/>
    <property type="evidence" value="ECO:0007669"/>
    <property type="project" value="UniProtKB-KW"/>
</dbReference>
<dbReference type="GO" id="GO:0004592">
    <property type="term" value="F:pantoate-beta-alanine ligase activity"/>
    <property type="evidence" value="ECO:0000318"/>
    <property type="project" value="GO_Central"/>
</dbReference>
<dbReference type="GO" id="GO:0015940">
    <property type="term" value="P:pantothenate biosynthetic process"/>
    <property type="evidence" value="ECO:0000318"/>
    <property type="project" value="GO_Central"/>
</dbReference>
<dbReference type="Gene3D" id="3.40.50.620">
    <property type="entry name" value="HUPs"/>
    <property type="match status" value="1"/>
</dbReference>
<dbReference type="Gene3D" id="3.30.1300.10">
    <property type="entry name" value="Pantoate-beta-alanine ligase, C-terminal domain"/>
    <property type="match status" value="1"/>
</dbReference>
<dbReference type="HAMAP" id="MF_00158">
    <property type="entry name" value="PanC"/>
    <property type="match status" value="1"/>
</dbReference>
<dbReference type="InterPro" id="IPR003721">
    <property type="entry name" value="Pantoate_ligase"/>
</dbReference>
<dbReference type="InterPro" id="IPR042176">
    <property type="entry name" value="Pantoate_ligase_C"/>
</dbReference>
<dbReference type="InterPro" id="IPR014729">
    <property type="entry name" value="Rossmann-like_a/b/a_fold"/>
</dbReference>
<dbReference type="NCBIfam" id="TIGR00018">
    <property type="entry name" value="panC"/>
    <property type="match status" value="1"/>
</dbReference>
<dbReference type="PANTHER" id="PTHR21299">
    <property type="entry name" value="CYTIDYLATE KINASE/PANTOATE-BETA-ALANINE LIGASE"/>
    <property type="match status" value="1"/>
</dbReference>
<dbReference type="PANTHER" id="PTHR21299:SF1">
    <property type="entry name" value="PANTOATE--BETA-ALANINE LIGASE"/>
    <property type="match status" value="1"/>
</dbReference>
<dbReference type="Pfam" id="PF02569">
    <property type="entry name" value="Pantoate_ligase"/>
    <property type="match status" value="1"/>
</dbReference>
<dbReference type="SUPFAM" id="SSF52374">
    <property type="entry name" value="Nucleotidylyl transferase"/>
    <property type="match status" value="1"/>
</dbReference>
<evidence type="ECO:0000255" key="1">
    <source>
        <dbReference type="HAMAP-Rule" id="MF_00158"/>
    </source>
</evidence>
<sequence length="257" mass="29479">MTKVIEALSDWQSIRKTINDLSVGFVPTMGNLHAGHLSLLERSKCENTITVLSLFINPTQFNDKNDFKNYPRTLAQDIAMAEENGIDYVLAPTDDALYPDQYAYKITNSTINNQEAEFRPRHFDGVLTVVMKLLLLVKPTRAYFGEKDYQQLQLVKGLAEAFFLDTEIIGCKIVRNEFGLPLSSRNRRLTEDQYQLAQRFSEIFHSDLSCDEIKNALIQEGIIVDYIEDYNERRFAAVHVGDIRLIDNIPFAKDKKC</sequence>
<proteinExistence type="inferred from homology"/>
<comment type="function">
    <text evidence="1">Catalyzes the condensation of pantoate with beta-alanine in an ATP-dependent reaction via a pantoyl-adenylate intermediate.</text>
</comment>
<comment type="catalytic activity">
    <reaction evidence="1">
        <text>(R)-pantoate + beta-alanine + ATP = (R)-pantothenate + AMP + diphosphate + H(+)</text>
        <dbReference type="Rhea" id="RHEA:10912"/>
        <dbReference type="ChEBI" id="CHEBI:15378"/>
        <dbReference type="ChEBI" id="CHEBI:15980"/>
        <dbReference type="ChEBI" id="CHEBI:29032"/>
        <dbReference type="ChEBI" id="CHEBI:30616"/>
        <dbReference type="ChEBI" id="CHEBI:33019"/>
        <dbReference type="ChEBI" id="CHEBI:57966"/>
        <dbReference type="ChEBI" id="CHEBI:456215"/>
        <dbReference type="EC" id="6.3.2.1"/>
    </reaction>
</comment>
<comment type="pathway">
    <text evidence="1">Cofactor biosynthesis; (R)-pantothenate biosynthesis; (R)-pantothenate from (R)-pantoate and beta-alanine: step 1/1.</text>
</comment>
<comment type="subunit">
    <text evidence="1">Homodimer.</text>
</comment>
<comment type="subcellular location">
    <subcellularLocation>
        <location evidence="1">Cytoplasm</location>
    </subcellularLocation>
</comment>
<comment type="miscellaneous">
    <text evidence="1">The reaction proceeds by a bi uni uni bi ping pong mechanism.</text>
</comment>
<comment type="similarity">
    <text evidence="1">Belongs to the pantothenate synthetase family.</text>
</comment>